<keyword id="KW-0001">2Fe-2S</keyword>
<keyword id="KW-0004">4Fe-4S</keyword>
<keyword id="KW-0963">Cytoplasm</keyword>
<keyword id="KW-0408">Iron</keyword>
<keyword id="KW-0411">Iron-sulfur</keyword>
<keyword id="KW-0479">Metal-binding</keyword>
<keyword id="KW-0496">Mitochondrion</keyword>
<keyword id="KW-1185">Reference proteome</keyword>
<proteinExistence type="inferred from homology"/>
<sequence length="119" mass="12814">MSSSATSTQAFSLKTRQPIPDEDALLTEEDRILKQATKGEDCTTRRRACKNCVCGRAELERKLEAEGKLEAEALAMPPGGCGNCSKGDAFRCANCPFLGQPAFDATEDGKVKLNLTDDV</sequence>
<accession>A4HT41</accession>
<protein>
    <recommendedName>
        <fullName>Anamorsin homolog</fullName>
    </recommendedName>
    <alternativeName>
        <fullName>Fe-S cluster assembly protein DRE2 homolog</fullName>
    </alternativeName>
</protein>
<gene>
    <name type="ORF">LinJ07.0210</name>
    <name type="ORF">LinJ_07_0390</name>
</gene>
<organism>
    <name type="scientific">Leishmania infantum</name>
    <dbReference type="NCBI Taxonomy" id="5671"/>
    <lineage>
        <taxon>Eukaryota</taxon>
        <taxon>Discoba</taxon>
        <taxon>Euglenozoa</taxon>
        <taxon>Kinetoplastea</taxon>
        <taxon>Metakinetoplastina</taxon>
        <taxon>Trypanosomatida</taxon>
        <taxon>Trypanosomatidae</taxon>
        <taxon>Leishmaniinae</taxon>
        <taxon>Leishmania</taxon>
    </lineage>
</organism>
<comment type="function">
    <text evidence="1">Component of the cytosolic iron-sulfur (Fe-S) protein assembly (CIA) machinery. Required for the maturation of extramitochondrial Fe-S proteins. Part of an electron transfer chain functioning in an early step of cytosolic Fe-S biogenesis, facilitating the de novo assembly of a [4Fe-4S] cluster on the cytosolic Fe-S scaffold complex. Electrons are transferred from NADPH via a FAD- and FMN-containing diflavin oxidoreductase. Together with the diflavin oxidoreductase, also required for the assembly of the diferric tyrosyl radical cofactor of ribonucleotide reductase (RNR), probably by providing electrons for reduction during radical cofactor maturation in the catalytic small subunit.</text>
</comment>
<comment type="cofactor">
    <cofactor evidence="1">
        <name>[2Fe-2S] cluster</name>
        <dbReference type="ChEBI" id="CHEBI:190135"/>
    </cofactor>
</comment>
<comment type="cofactor">
    <cofactor evidence="1">
        <name>[4Fe-4S] cluster</name>
        <dbReference type="ChEBI" id="CHEBI:49883"/>
    </cofactor>
</comment>
<comment type="subunit">
    <text evidence="2">Monomer.</text>
</comment>
<comment type="subcellular location">
    <subcellularLocation>
        <location evidence="1">Cytoplasm</location>
    </subcellularLocation>
    <subcellularLocation>
        <location evidence="1">Mitochondrion intermembrane space</location>
    </subcellularLocation>
</comment>
<comment type="domain">
    <text evidence="1">The C-terminal domain binds 2 Fe-S clusters but is otherwise mostly in an intrinsically disordered conformation.</text>
</comment>
<comment type="domain">
    <text evidence="1">The twin Cx2C motifs are involved in the recognition by the mitochondrial MIA40-ERV1 disulfide relay system. The formation of 2 disulfide bonds in the Cx2C motifs through dithiol/disulfide exchange reactions effectively traps the protein in the mitochondrial intermembrane space.</text>
</comment>
<comment type="similarity">
    <text evidence="4">Belongs to the anamorsin family.</text>
</comment>
<reference key="1">
    <citation type="journal article" date="2007" name="Nat. Genet.">
        <title>Comparative genomic analysis of three Leishmania species that cause diverse human disease.</title>
        <authorList>
            <person name="Peacock C.S."/>
            <person name="Seeger K."/>
            <person name="Harris D."/>
            <person name="Murphy L."/>
            <person name="Ruiz J.C."/>
            <person name="Quail M.A."/>
            <person name="Peters N."/>
            <person name="Adlem E."/>
            <person name="Tivey A."/>
            <person name="Aslett M."/>
            <person name="Kerhornou A."/>
            <person name="Ivens A."/>
            <person name="Fraser A."/>
            <person name="Rajandream M.-A."/>
            <person name="Carver T."/>
            <person name="Norbertczak H."/>
            <person name="Chillingworth T."/>
            <person name="Hance Z."/>
            <person name="Jagels K."/>
            <person name="Moule S."/>
            <person name="Ormond D."/>
            <person name="Rutter S."/>
            <person name="Sqaures R."/>
            <person name="Whitehead S."/>
            <person name="Rabbinowitsch E."/>
            <person name="Arrowsmith C."/>
            <person name="White B."/>
            <person name="Thurston S."/>
            <person name="Bringaud F."/>
            <person name="Baldauf S.L."/>
            <person name="Faulconbridge A."/>
            <person name="Jeffares D."/>
            <person name="Depledge D.P."/>
            <person name="Oyola S.O."/>
            <person name="Hilley J.D."/>
            <person name="Brito L.O."/>
            <person name="Tosi L.R.O."/>
            <person name="Barrell B."/>
            <person name="Cruz A.K."/>
            <person name="Mottram J.C."/>
            <person name="Smith D.F."/>
            <person name="Berriman M."/>
        </authorList>
    </citation>
    <scope>NUCLEOTIDE SEQUENCE [LARGE SCALE GENOMIC DNA]</scope>
    <source>
        <strain>JPCM5</strain>
    </source>
</reference>
<name>DRE2_LEIIN</name>
<feature type="chain" id="PRO_0000392364" description="Anamorsin homolog">
    <location>
        <begin position="1"/>
        <end position="119"/>
    </location>
</feature>
<feature type="region of interest" description="Disordered" evidence="3">
    <location>
        <begin position="1"/>
        <end position="21"/>
    </location>
</feature>
<feature type="region of interest" description="Disordered" evidence="1">
    <location>
        <begin position="33"/>
        <end position="119"/>
    </location>
</feature>
<feature type="region of interest" description="Fe-S binding site A" evidence="1">
    <location>
        <begin position="42"/>
        <end position="54"/>
    </location>
</feature>
<feature type="region of interest" description="Fe-S binding site B" evidence="1">
    <location>
        <begin position="81"/>
        <end position="95"/>
    </location>
</feature>
<feature type="short sequence motif" description="Cx2C motif 1" evidence="1">
    <location>
        <begin position="81"/>
        <end position="84"/>
    </location>
</feature>
<feature type="short sequence motif" description="Cx2C motif 2" evidence="1">
    <location>
        <begin position="92"/>
        <end position="95"/>
    </location>
</feature>
<feature type="compositionally biased region" description="Polar residues" evidence="3">
    <location>
        <begin position="1"/>
        <end position="15"/>
    </location>
</feature>
<feature type="binding site" evidence="1">
    <location>
        <position position="42"/>
    </location>
    <ligand>
        <name>[2Fe-2S] cluster</name>
        <dbReference type="ChEBI" id="CHEBI:190135"/>
    </ligand>
</feature>
<feature type="binding site" evidence="1">
    <location>
        <position position="49"/>
    </location>
    <ligand>
        <name>[2Fe-2S] cluster</name>
        <dbReference type="ChEBI" id="CHEBI:190135"/>
    </ligand>
</feature>
<feature type="binding site" evidence="1">
    <location>
        <position position="52"/>
    </location>
    <ligand>
        <name>[2Fe-2S] cluster</name>
        <dbReference type="ChEBI" id="CHEBI:190135"/>
    </ligand>
</feature>
<feature type="binding site" evidence="1">
    <location>
        <position position="54"/>
    </location>
    <ligand>
        <name>[2Fe-2S] cluster</name>
        <dbReference type="ChEBI" id="CHEBI:190135"/>
    </ligand>
</feature>
<feature type="binding site" evidence="1">
    <location>
        <position position="81"/>
    </location>
    <ligand>
        <name>[4Fe-4S] cluster</name>
        <dbReference type="ChEBI" id="CHEBI:49883"/>
    </ligand>
</feature>
<feature type="binding site" evidence="1">
    <location>
        <position position="84"/>
    </location>
    <ligand>
        <name>[4Fe-4S] cluster</name>
        <dbReference type="ChEBI" id="CHEBI:49883"/>
    </ligand>
</feature>
<feature type="binding site" evidence="1">
    <location>
        <position position="92"/>
    </location>
    <ligand>
        <name>[4Fe-4S] cluster</name>
        <dbReference type="ChEBI" id="CHEBI:49883"/>
    </ligand>
</feature>
<feature type="binding site" evidence="1">
    <location>
        <position position="95"/>
    </location>
    <ligand>
        <name>[4Fe-4S] cluster</name>
        <dbReference type="ChEBI" id="CHEBI:49883"/>
    </ligand>
</feature>
<dbReference type="EMBL" id="FR796439">
    <property type="protein sequence ID" value="CAM65586.1"/>
    <property type="molecule type" value="Genomic_DNA"/>
</dbReference>
<dbReference type="RefSeq" id="XP_001463232.1">
    <property type="nucleotide sequence ID" value="XM_001463195.1"/>
</dbReference>
<dbReference type="STRING" id="5671.A4HT41"/>
<dbReference type="GeneID" id="5066681"/>
<dbReference type="KEGG" id="lif:LINJ_07_0390"/>
<dbReference type="VEuPathDB" id="TriTrypDB:LINF_070007500"/>
<dbReference type="eggNOG" id="KOG4020">
    <property type="taxonomic scope" value="Eukaryota"/>
</dbReference>
<dbReference type="InParanoid" id="A4HT41"/>
<dbReference type="OMA" id="TMPPGGC"/>
<dbReference type="Proteomes" id="UP000008153">
    <property type="component" value="Chromosome 7"/>
</dbReference>
<dbReference type="GO" id="GO:0005758">
    <property type="term" value="C:mitochondrial intermembrane space"/>
    <property type="evidence" value="ECO:0007669"/>
    <property type="project" value="UniProtKB-SubCell"/>
</dbReference>
<dbReference type="GO" id="GO:0051537">
    <property type="term" value="F:2 iron, 2 sulfur cluster binding"/>
    <property type="evidence" value="ECO:0007669"/>
    <property type="project" value="UniProtKB-KW"/>
</dbReference>
<dbReference type="GO" id="GO:0051539">
    <property type="term" value="F:4 iron, 4 sulfur cluster binding"/>
    <property type="evidence" value="ECO:0007669"/>
    <property type="project" value="UniProtKB-KW"/>
</dbReference>
<dbReference type="GO" id="GO:0046872">
    <property type="term" value="F:metal ion binding"/>
    <property type="evidence" value="ECO:0007669"/>
    <property type="project" value="UniProtKB-KW"/>
</dbReference>
<dbReference type="GO" id="GO:0016226">
    <property type="term" value="P:iron-sulfur cluster assembly"/>
    <property type="evidence" value="ECO:0007669"/>
    <property type="project" value="InterPro"/>
</dbReference>
<dbReference type="InterPro" id="IPR007785">
    <property type="entry name" value="Anamorsin"/>
</dbReference>
<dbReference type="InterPro" id="IPR046408">
    <property type="entry name" value="CIAPIN1"/>
</dbReference>
<dbReference type="PANTHER" id="PTHR13273">
    <property type="entry name" value="ANAMORSIN"/>
    <property type="match status" value="1"/>
</dbReference>
<dbReference type="PANTHER" id="PTHR13273:SF14">
    <property type="entry name" value="ANAMORSIN"/>
    <property type="match status" value="1"/>
</dbReference>
<dbReference type="Pfam" id="PF05093">
    <property type="entry name" value="CIAPIN1"/>
    <property type="match status" value="1"/>
</dbReference>
<evidence type="ECO:0000250" key="1">
    <source>
        <dbReference type="UniProtKB" id="P36152"/>
    </source>
</evidence>
<evidence type="ECO:0000250" key="2">
    <source>
        <dbReference type="UniProtKB" id="Q6FI81"/>
    </source>
</evidence>
<evidence type="ECO:0000256" key="3">
    <source>
        <dbReference type="SAM" id="MobiDB-lite"/>
    </source>
</evidence>
<evidence type="ECO:0000305" key="4"/>